<protein>
    <recommendedName>
        <fullName evidence="1">Disulfide bond formation protein B</fullName>
    </recommendedName>
    <alternativeName>
        <fullName evidence="1">Disulfide oxidoreductase</fullName>
    </alternativeName>
</protein>
<reference key="1">
    <citation type="journal article" date="2000" name="Science">
        <title>Complete genome sequence of Neisseria meningitidis serogroup B strain MC58.</title>
        <authorList>
            <person name="Tettelin H."/>
            <person name="Saunders N.J."/>
            <person name="Heidelberg J.F."/>
            <person name="Jeffries A.C."/>
            <person name="Nelson K.E."/>
            <person name="Eisen J.A."/>
            <person name="Ketchum K.A."/>
            <person name="Hood D.W."/>
            <person name="Peden J.F."/>
            <person name="Dodson R.J."/>
            <person name="Nelson W.C."/>
            <person name="Gwinn M.L."/>
            <person name="DeBoy R.T."/>
            <person name="Peterson J.D."/>
            <person name="Hickey E.K."/>
            <person name="Haft D.H."/>
            <person name="Salzberg S.L."/>
            <person name="White O."/>
            <person name="Fleischmann R.D."/>
            <person name="Dougherty B.A."/>
            <person name="Mason T.M."/>
            <person name="Ciecko A."/>
            <person name="Parksey D.S."/>
            <person name="Blair E."/>
            <person name="Cittone H."/>
            <person name="Clark E.B."/>
            <person name="Cotton M.D."/>
            <person name="Utterback T.R."/>
            <person name="Khouri H.M."/>
            <person name="Qin H."/>
            <person name="Vamathevan J.J."/>
            <person name="Gill J."/>
            <person name="Scarlato V."/>
            <person name="Masignani V."/>
            <person name="Pizza M."/>
            <person name="Grandi G."/>
            <person name="Sun L."/>
            <person name="Smith H.O."/>
            <person name="Fraser C.M."/>
            <person name="Moxon E.R."/>
            <person name="Rappuoli R."/>
            <person name="Venter J.C."/>
        </authorList>
    </citation>
    <scope>NUCLEOTIDE SEQUENCE [LARGE SCALE GENOMIC DNA]</scope>
    <source>
        <strain>ATCC BAA-335 / MC58</strain>
    </source>
</reference>
<accession>Q9JYC6</accession>
<dbReference type="EMBL" id="AE002098">
    <property type="protein sequence ID" value="AAF41998.1"/>
    <property type="molecule type" value="Genomic_DNA"/>
</dbReference>
<dbReference type="PIR" id="H81058">
    <property type="entry name" value="H81058"/>
</dbReference>
<dbReference type="RefSeq" id="NP_274654.1">
    <property type="nucleotide sequence ID" value="NC_003112.2"/>
</dbReference>
<dbReference type="RefSeq" id="WP_002216721.1">
    <property type="nucleotide sequence ID" value="NC_003112.2"/>
</dbReference>
<dbReference type="FunCoup" id="Q9JYC6">
    <property type="interactions" value="51"/>
</dbReference>
<dbReference type="STRING" id="122586.NMB1649"/>
<dbReference type="PaxDb" id="122586-NMB1649"/>
<dbReference type="KEGG" id="nme:NMB1649"/>
<dbReference type="PATRIC" id="fig|122586.8.peg.2121"/>
<dbReference type="HOGENOM" id="CLU_098660_1_1_4"/>
<dbReference type="InParanoid" id="Q9JYC6"/>
<dbReference type="OrthoDB" id="3711263at2"/>
<dbReference type="Proteomes" id="UP000000425">
    <property type="component" value="Chromosome"/>
</dbReference>
<dbReference type="GO" id="GO:0005886">
    <property type="term" value="C:plasma membrane"/>
    <property type="evidence" value="ECO:0007669"/>
    <property type="project" value="UniProtKB-SubCell"/>
</dbReference>
<dbReference type="GO" id="GO:0009055">
    <property type="term" value="F:electron transfer activity"/>
    <property type="evidence" value="ECO:0007669"/>
    <property type="project" value="UniProtKB-UniRule"/>
</dbReference>
<dbReference type="GO" id="GO:0015035">
    <property type="term" value="F:protein-disulfide reductase activity"/>
    <property type="evidence" value="ECO:0007669"/>
    <property type="project" value="UniProtKB-UniRule"/>
</dbReference>
<dbReference type="GO" id="GO:0006457">
    <property type="term" value="P:protein folding"/>
    <property type="evidence" value="ECO:0007669"/>
    <property type="project" value="InterPro"/>
</dbReference>
<dbReference type="Gene3D" id="1.20.1550.10">
    <property type="entry name" value="DsbB-like"/>
    <property type="match status" value="1"/>
</dbReference>
<dbReference type="HAMAP" id="MF_00286">
    <property type="entry name" value="DsbB"/>
    <property type="match status" value="1"/>
</dbReference>
<dbReference type="InterPro" id="IPR003752">
    <property type="entry name" value="DiS_bond_form_DsbB/BdbC"/>
</dbReference>
<dbReference type="InterPro" id="IPR022920">
    <property type="entry name" value="Disulphide_bond_form_DsbB"/>
</dbReference>
<dbReference type="InterPro" id="IPR050183">
    <property type="entry name" value="DsbB"/>
</dbReference>
<dbReference type="InterPro" id="IPR023380">
    <property type="entry name" value="DsbB-like_sf"/>
</dbReference>
<dbReference type="PANTHER" id="PTHR36570">
    <property type="entry name" value="DISULFIDE BOND FORMATION PROTEIN B"/>
    <property type="match status" value="1"/>
</dbReference>
<dbReference type="PANTHER" id="PTHR36570:SF3">
    <property type="entry name" value="DISULFIDE BOND FORMATION PROTEIN B"/>
    <property type="match status" value="1"/>
</dbReference>
<dbReference type="Pfam" id="PF02600">
    <property type="entry name" value="DsbB"/>
    <property type="match status" value="1"/>
</dbReference>
<dbReference type="SUPFAM" id="SSF158442">
    <property type="entry name" value="DsbB-like"/>
    <property type="match status" value="1"/>
</dbReference>
<sequence>MTPLFRKAVWLLFAVSVCAFAGSLAAQYVLGMEPCVLCISQRLCVLATALCTAIVLMCRPRRRAGGLFGAVFISIPAVTGISVAAYQLWLQSLPPGTAPSCGAPWTFRLKGWPLFDWFEPVVRGFGNCAEPDYLLGIALPVWSVAYFLAVVLTVWWAWARAK</sequence>
<evidence type="ECO:0000255" key="1">
    <source>
        <dbReference type="HAMAP-Rule" id="MF_00286"/>
    </source>
</evidence>
<feature type="chain" id="PRO_0000059348" description="Disulfide bond formation protein B">
    <location>
        <begin position="1"/>
        <end position="162"/>
    </location>
</feature>
<feature type="topological domain" description="Cytoplasmic" evidence="1">
    <location>
        <begin position="1"/>
        <end position="8"/>
    </location>
</feature>
<feature type="transmembrane region" description="Helical" evidence="1">
    <location>
        <begin position="9"/>
        <end position="25"/>
    </location>
</feature>
<feature type="topological domain" description="Periplasmic" evidence="1">
    <location>
        <begin position="26"/>
        <end position="43"/>
    </location>
</feature>
<feature type="transmembrane region" description="Helical" evidence="1">
    <location>
        <begin position="44"/>
        <end position="60"/>
    </location>
</feature>
<feature type="topological domain" description="Cytoplasmic" evidence="1">
    <location>
        <begin position="61"/>
        <end position="67"/>
    </location>
</feature>
<feature type="transmembrane region" description="Helical" evidence="1">
    <location>
        <begin position="68"/>
        <end position="85"/>
    </location>
</feature>
<feature type="topological domain" description="Periplasmic" evidence="1">
    <location>
        <begin position="86"/>
        <end position="141"/>
    </location>
</feature>
<feature type="transmembrane region" description="Helical" evidence="1">
    <location>
        <begin position="142"/>
        <end position="160"/>
    </location>
</feature>
<feature type="topological domain" description="Cytoplasmic" evidence="1">
    <location>
        <begin position="161"/>
        <end position="162"/>
    </location>
</feature>
<feature type="disulfide bond" description="Redox-active" evidence="1">
    <location>
        <begin position="35"/>
        <end position="38"/>
    </location>
</feature>
<feature type="disulfide bond" description="Redox-active" evidence="1">
    <location>
        <begin position="101"/>
        <end position="128"/>
    </location>
</feature>
<gene>
    <name evidence="1" type="primary">dsbB</name>
    <name type="ordered locus">NMB1649</name>
</gene>
<comment type="function">
    <text evidence="1">Required for disulfide bond formation in some periplasmic proteins. Acts by oxidizing the DsbA protein.</text>
</comment>
<comment type="subcellular location">
    <subcellularLocation>
        <location evidence="1">Cell inner membrane</location>
        <topology evidence="1">Multi-pass membrane protein</topology>
    </subcellularLocation>
</comment>
<comment type="similarity">
    <text evidence="1">Belongs to the DsbB family.</text>
</comment>
<keyword id="KW-0997">Cell inner membrane</keyword>
<keyword id="KW-1003">Cell membrane</keyword>
<keyword id="KW-0143">Chaperone</keyword>
<keyword id="KW-1015">Disulfide bond</keyword>
<keyword id="KW-0249">Electron transport</keyword>
<keyword id="KW-0472">Membrane</keyword>
<keyword id="KW-0560">Oxidoreductase</keyword>
<keyword id="KW-0676">Redox-active center</keyword>
<keyword id="KW-1185">Reference proteome</keyword>
<keyword id="KW-0812">Transmembrane</keyword>
<keyword id="KW-1133">Transmembrane helix</keyword>
<keyword id="KW-0813">Transport</keyword>
<organism>
    <name type="scientific">Neisseria meningitidis serogroup B (strain ATCC BAA-335 / MC58)</name>
    <dbReference type="NCBI Taxonomy" id="122586"/>
    <lineage>
        <taxon>Bacteria</taxon>
        <taxon>Pseudomonadati</taxon>
        <taxon>Pseudomonadota</taxon>
        <taxon>Betaproteobacteria</taxon>
        <taxon>Neisseriales</taxon>
        <taxon>Neisseriaceae</taxon>
        <taxon>Neisseria</taxon>
    </lineage>
</organism>
<name>DSBB_NEIMB</name>
<proteinExistence type="inferred from homology"/>